<sequence>MPTTSHSFHLSPQGK</sequence>
<organism evidence="1">
    <name type="scientific">Limosilactobacillus fermentum</name>
    <name type="common">Lactobacillus fermentum</name>
    <dbReference type="NCBI Taxonomy" id="1613"/>
    <lineage>
        <taxon>Bacteria</taxon>
        <taxon>Bacillati</taxon>
        <taxon>Bacillota</taxon>
        <taxon>Bacilli</taxon>
        <taxon>Lactobacillales</taxon>
        <taxon>Lactobacillaceae</taxon>
        <taxon>Limosilactobacillus</taxon>
    </lineage>
</organism>
<evidence type="ECO:0000269" key="1">
    <source ref="1"/>
</evidence>
<evidence type="ECO:0000303" key="2">
    <source ref="1"/>
</evidence>
<evidence type="ECO:0000305" key="3"/>
<accession>C0HL61</accession>
<reference evidence="3" key="1">
    <citation type="submission" date="2017-11" db="UniProtKB">
        <title>Isolation, identification of Lactobacillus mucosae AN1 and its anti-listerial peptide purification and characterization.</title>
        <authorList>
            <person name="Repally A."/>
            <person name="Perumal V."/>
            <person name="Dasari A."/>
            <person name="Venkatesan A."/>
        </authorList>
    </citation>
    <scope>PROTEIN SEQUENCE</scope>
    <scope>FUNCTION</scope>
    <scope>SUBCELLULAR LOCATION</scope>
    <scope>MASS SPECTROMETRY</scope>
</reference>
<proteinExistence type="evidence at protein level"/>
<comment type="function">
    <text evidence="1">Has antibacterial activity against Escherichia coli, Salmonella typhi, Streptococcus mutans, Staphylococcus aureus, Listeria monocytogenes, Vibrio vulnificus and Vibrio parahaemolyticus.</text>
</comment>
<comment type="subcellular location">
    <subcellularLocation>
        <location evidence="1">Secreted</location>
    </subcellularLocation>
</comment>
<comment type="mass spectrometry"/>
<keyword id="KW-0044">Antibiotic</keyword>
<keyword id="KW-0929">Antimicrobial</keyword>
<keyword id="KW-0903">Direct protein sequencing</keyword>
<keyword id="KW-0964">Secreted</keyword>
<dbReference type="GO" id="GO:0005576">
    <property type="term" value="C:extracellular region"/>
    <property type="evidence" value="ECO:0007669"/>
    <property type="project" value="UniProtKB-SubCell"/>
</dbReference>
<dbReference type="GO" id="GO:0042742">
    <property type="term" value="P:defense response to bacterium"/>
    <property type="evidence" value="ECO:0007669"/>
    <property type="project" value="UniProtKB-KW"/>
</dbReference>
<name>ABFER_LIMFE</name>
<feature type="peptide" id="PRO_0000460480" description="Antibacterial peptide fermentin SNR1" evidence="1">
    <location>
        <begin position="1"/>
        <end position="15"/>
    </location>
</feature>
<feature type="non-terminal residue" evidence="1">
    <location>
        <position position="15"/>
    </location>
</feature>
<protein>
    <recommendedName>
        <fullName evidence="2">Antibacterial peptide fermentin SNR1</fullName>
    </recommendedName>
</protein>